<proteinExistence type="inferred from homology"/>
<reference key="1">
    <citation type="journal article" date="1998" name="Mol. Microbiol.">
        <title>Biochemical and genetic characterization of benzylsuccinate synthase from Thauera aromatica: a new glycyl radical enzyme catalysing the first step in anaerobic toluene metabolism.</title>
        <authorList>
            <person name="Leuthner B."/>
            <person name="Leutwein C."/>
            <person name="Schulz H."/>
            <person name="Horth P."/>
            <person name="Haehnel W."/>
            <person name="Schiltz E."/>
            <person name="Schagger H."/>
            <person name="Heider J."/>
        </authorList>
    </citation>
    <scope>NUCLEOTIDE SEQUENCE [GENOMIC DNA]</scope>
    <source>
        <strain>DSM 6984 / CIP 107765 / K172</strain>
    </source>
</reference>
<reference key="2">
    <citation type="journal article" date="1998" name="FEMS Microbiol. Lett.">
        <title>A two-component system involved in regulation of anaerobic toluene metabolism in Thauera aromatica.</title>
        <authorList>
            <person name="Leuthner B."/>
            <person name="Heider J."/>
        </authorList>
    </citation>
    <scope>FUNCTION</scope>
    <source>
        <strain>DSM 6984 / CIP 107765 / K172</strain>
    </source>
</reference>
<accession>O87939</accession>
<keyword id="KW-0067">ATP-binding</keyword>
<keyword id="KW-0418">Kinase</keyword>
<keyword id="KW-0547">Nucleotide-binding</keyword>
<keyword id="KW-0597">Phosphoprotein</keyword>
<keyword id="KW-0677">Repeat</keyword>
<keyword id="KW-0808">Transferase</keyword>
<keyword id="KW-0902">Two-component regulatory system</keyword>
<comment type="function">
    <text evidence="5">Member of the two-component regulatory system TdiR/TdiS, which probably regulates transcription of toluene catabolic genes (bss operon). May activate TdiR by phosphorylation.</text>
</comment>
<comment type="catalytic activity">
    <reaction>
        <text>ATP + protein L-histidine = ADP + protein N-phospho-L-histidine.</text>
        <dbReference type="EC" id="2.7.13.3"/>
    </reaction>
</comment>
<comment type="PTM">
    <text evidence="1">Autophosphorylated.</text>
</comment>
<name>TDIS_THAAR</name>
<evidence type="ECO:0000250" key="1"/>
<evidence type="ECO:0000255" key="2">
    <source>
        <dbReference type="PROSITE-ProRule" id="PRU00107"/>
    </source>
</evidence>
<evidence type="ECO:0000255" key="3">
    <source>
        <dbReference type="PROSITE-ProRule" id="PRU00140"/>
    </source>
</evidence>
<evidence type="ECO:0000255" key="4">
    <source>
        <dbReference type="PROSITE-ProRule" id="PRU00141"/>
    </source>
</evidence>
<evidence type="ECO:0000269" key="5">
    <source>
    </source>
</evidence>
<dbReference type="EC" id="2.7.13.3"/>
<dbReference type="EMBL" id="AJ001848">
    <property type="protein sequence ID" value="CAA05048.1"/>
    <property type="molecule type" value="Genomic_DNA"/>
</dbReference>
<dbReference type="SMR" id="O87939"/>
<dbReference type="GO" id="GO:0005524">
    <property type="term" value="F:ATP binding"/>
    <property type="evidence" value="ECO:0007669"/>
    <property type="project" value="UniProtKB-KW"/>
</dbReference>
<dbReference type="GO" id="GO:0004673">
    <property type="term" value="F:protein histidine kinase activity"/>
    <property type="evidence" value="ECO:0007669"/>
    <property type="project" value="UniProtKB-EC"/>
</dbReference>
<dbReference type="GO" id="GO:0000160">
    <property type="term" value="P:phosphorelay signal transduction system"/>
    <property type="evidence" value="ECO:0007669"/>
    <property type="project" value="UniProtKB-KW"/>
</dbReference>
<dbReference type="CDD" id="cd16920">
    <property type="entry name" value="HATPase_TmoS-FixL-DctS-like"/>
    <property type="match status" value="1"/>
</dbReference>
<dbReference type="CDD" id="cd00130">
    <property type="entry name" value="PAS"/>
    <property type="match status" value="1"/>
</dbReference>
<dbReference type="Gene3D" id="1.10.287.130">
    <property type="match status" value="1"/>
</dbReference>
<dbReference type="Gene3D" id="3.30.565.10">
    <property type="entry name" value="Histidine kinase-like ATPase, C-terminal domain"/>
    <property type="match status" value="1"/>
</dbReference>
<dbReference type="Gene3D" id="3.30.450.20">
    <property type="entry name" value="PAS domain"/>
    <property type="match status" value="2"/>
</dbReference>
<dbReference type="InterPro" id="IPR036890">
    <property type="entry name" value="HATPase_C_sf"/>
</dbReference>
<dbReference type="InterPro" id="IPR005467">
    <property type="entry name" value="His_kinase_dom"/>
</dbReference>
<dbReference type="InterPro" id="IPR001610">
    <property type="entry name" value="PAC"/>
</dbReference>
<dbReference type="InterPro" id="IPR000014">
    <property type="entry name" value="PAS"/>
</dbReference>
<dbReference type="InterPro" id="IPR000700">
    <property type="entry name" value="PAS-assoc_C"/>
</dbReference>
<dbReference type="InterPro" id="IPR035965">
    <property type="entry name" value="PAS-like_dom_sf"/>
</dbReference>
<dbReference type="InterPro" id="IPR052162">
    <property type="entry name" value="Sensor_kinase/Photoreceptor"/>
</dbReference>
<dbReference type="InterPro" id="IPR004358">
    <property type="entry name" value="Sig_transdc_His_kin-like_C"/>
</dbReference>
<dbReference type="NCBIfam" id="TIGR00229">
    <property type="entry name" value="sensory_box"/>
    <property type="match status" value="2"/>
</dbReference>
<dbReference type="PANTHER" id="PTHR43304:SF1">
    <property type="entry name" value="PAC DOMAIN-CONTAINING PROTEIN"/>
    <property type="match status" value="1"/>
</dbReference>
<dbReference type="PANTHER" id="PTHR43304">
    <property type="entry name" value="PHYTOCHROME-LIKE PROTEIN CPH1"/>
    <property type="match status" value="1"/>
</dbReference>
<dbReference type="Pfam" id="PF02518">
    <property type="entry name" value="HATPase_c"/>
    <property type="match status" value="1"/>
</dbReference>
<dbReference type="Pfam" id="PF13188">
    <property type="entry name" value="PAS_8"/>
    <property type="match status" value="1"/>
</dbReference>
<dbReference type="Pfam" id="PF13426">
    <property type="entry name" value="PAS_9"/>
    <property type="match status" value="1"/>
</dbReference>
<dbReference type="PRINTS" id="PR00344">
    <property type="entry name" value="BCTRLSENSOR"/>
</dbReference>
<dbReference type="SMART" id="SM00387">
    <property type="entry name" value="HATPase_c"/>
    <property type="match status" value="1"/>
</dbReference>
<dbReference type="SMART" id="SM00086">
    <property type="entry name" value="PAC"/>
    <property type="match status" value="2"/>
</dbReference>
<dbReference type="SMART" id="SM00091">
    <property type="entry name" value="PAS"/>
    <property type="match status" value="2"/>
</dbReference>
<dbReference type="SUPFAM" id="SSF55874">
    <property type="entry name" value="ATPase domain of HSP90 chaperone/DNA topoisomerase II/histidine kinase"/>
    <property type="match status" value="1"/>
</dbReference>
<dbReference type="SUPFAM" id="SSF55785">
    <property type="entry name" value="PYP-like sensor domain (PAS domain)"/>
    <property type="match status" value="2"/>
</dbReference>
<dbReference type="PROSITE" id="PS50109">
    <property type="entry name" value="HIS_KIN"/>
    <property type="match status" value="1"/>
</dbReference>
<dbReference type="PROSITE" id="PS50113">
    <property type="entry name" value="PAC"/>
    <property type="match status" value="1"/>
</dbReference>
<dbReference type="PROSITE" id="PS50112">
    <property type="entry name" value="PAS"/>
    <property type="match status" value="1"/>
</dbReference>
<gene>
    <name type="primary">tdiS</name>
</gene>
<protein>
    <recommendedName>
        <fullName>Sensor protein TdiS</fullName>
        <ecNumber>2.7.13.3</ecNumber>
    </recommendedName>
</protein>
<organism>
    <name type="scientific">Thauera aromatica</name>
    <dbReference type="NCBI Taxonomy" id="59405"/>
    <lineage>
        <taxon>Bacteria</taxon>
        <taxon>Pseudomonadati</taxon>
        <taxon>Pseudomonadota</taxon>
        <taxon>Betaproteobacteria</taxon>
        <taxon>Rhodocyclales</taxon>
        <taxon>Zoogloeaceae</taxon>
        <taxon>Thauera</taxon>
    </lineage>
</organism>
<sequence length="548" mass="62441">MSGNAIASTETEMEADHGNDPATGYEVIFRNTPLAICHLRNRAFVRCNTRFEELFGYARGELDNKSVRLLYPTDESFRTIGENYGHFFERHDTFKDERPIIRKDGSVIWCIVTGSLLDSSNPRLGSIWVVQDISEHKRTEDDLKASVEKLEILVHQRTLELHKHVNKLEQEVATRKLAEEVANEHREKYEKLFHMLPIGISITDNEGRILEANRQFTELVGTPEKPPITWQQLPQRFFLSDGTKVARKRLPWRIHDVQKDSIKNIEIGMREEESRKQRWLSVSSSLLELKGQKMVVAAFTDITYRKRIEELERLRHAELTRLGRINAMAGMAAALAHQMGQPLVSALNYLQGCRLRLEHIRGAAEISQSLGLAITHLDQAGEILRRVKDFVCKHTPERTPENINEVIQDTLSFLSFDVHRHNVTVNLQLIPSPPAVPLCKIEIQQVLFNLVKNGIEAMSEMEPESRILTIGNEISTDGRSMKIFVQDHGVGVEKRAEKRAFEPYFTTKPDGLGIGLTICRSIIESHGGELSFSKTGERGSKFQFTLPI</sequence>
<feature type="chain" id="PRO_0000418870" description="Sensor protein TdiS">
    <location>
        <begin position="1"/>
        <end position="548"/>
    </location>
</feature>
<feature type="domain" description="PAS 1" evidence="3">
    <location>
        <begin position="20"/>
        <end position="89"/>
    </location>
</feature>
<feature type="domain" description="PAC 1" evidence="4">
    <location>
        <begin position="94"/>
        <end position="145"/>
    </location>
</feature>
<feature type="domain" description="PAS 2" evidence="3">
    <location>
        <begin position="185"/>
        <end position="256"/>
    </location>
</feature>
<feature type="domain" description="PAC 2" evidence="4">
    <location>
        <begin position="263"/>
        <end position="314"/>
    </location>
</feature>
<feature type="domain" description="Histidine kinase" evidence="2">
    <location>
        <begin position="334"/>
        <end position="548"/>
    </location>
</feature>
<feature type="modified residue" description="Phosphohistidine; by autocatalysis" evidence="2">
    <location>
        <position position="337"/>
    </location>
</feature>